<proteinExistence type="predicted"/>
<sequence>MGTIVCQDCNEAIHYFEDEKVTTLYGTCCGQCQCPVDEE</sequence>
<keyword id="KW-1185">Reference proteome</keyword>
<protein>
    <recommendedName>
        <fullName>Uncharacterized protein YkzW</fullName>
    </recommendedName>
</protein>
<name>YKZW_BACSU</name>
<feature type="chain" id="PRO_0000382211" description="Uncharacterized protein YkzW">
    <location>
        <begin position="1"/>
        <end position="39"/>
    </location>
</feature>
<organism>
    <name type="scientific">Bacillus subtilis (strain 168)</name>
    <dbReference type="NCBI Taxonomy" id="224308"/>
    <lineage>
        <taxon>Bacteria</taxon>
        <taxon>Bacillati</taxon>
        <taxon>Bacillota</taxon>
        <taxon>Bacilli</taxon>
        <taxon>Bacillales</taxon>
        <taxon>Bacillaceae</taxon>
        <taxon>Bacillus</taxon>
    </lineage>
</organism>
<gene>
    <name type="primary">ykzW</name>
    <name type="ordered locus">BSU14629</name>
</gene>
<accession>C0H410</accession>
<reference key="1">
    <citation type="journal article" date="1997" name="Nature">
        <title>The complete genome sequence of the Gram-positive bacterium Bacillus subtilis.</title>
        <authorList>
            <person name="Kunst F."/>
            <person name="Ogasawara N."/>
            <person name="Moszer I."/>
            <person name="Albertini A.M."/>
            <person name="Alloni G."/>
            <person name="Azevedo V."/>
            <person name="Bertero M.G."/>
            <person name="Bessieres P."/>
            <person name="Bolotin A."/>
            <person name="Borchert S."/>
            <person name="Borriss R."/>
            <person name="Boursier L."/>
            <person name="Brans A."/>
            <person name="Braun M."/>
            <person name="Brignell S.C."/>
            <person name="Bron S."/>
            <person name="Brouillet S."/>
            <person name="Bruschi C.V."/>
            <person name="Caldwell B."/>
            <person name="Capuano V."/>
            <person name="Carter N.M."/>
            <person name="Choi S.-K."/>
            <person name="Codani J.-J."/>
            <person name="Connerton I.F."/>
            <person name="Cummings N.J."/>
            <person name="Daniel R.A."/>
            <person name="Denizot F."/>
            <person name="Devine K.M."/>
            <person name="Duesterhoeft A."/>
            <person name="Ehrlich S.D."/>
            <person name="Emmerson P.T."/>
            <person name="Entian K.-D."/>
            <person name="Errington J."/>
            <person name="Fabret C."/>
            <person name="Ferrari E."/>
            <person name="Foulger D."/>
            <person name="Fritz C."/>
            <person name="Fujita M."/>
            <person name="Fujita Y."/>
            <person name="Fuma S."/>
            <person name="Galizzi A."/>
            <person name="Galleron N."/>
            <person name="Ghim S.-Y."/>
            <person name="Glaser P."/>
            <person name="Goffeau A."/>
            <person name="Golightly E.J."/>
            <person name="Grandi G."/>
            <person name="Guiseppi G."/>
            <person name="Guy B.J."/>
            <person name="Haga K."/>
            <person name="Haiech J."/>
            <person name="Harwood C.R."/>
            <person name="Henaut A."/>
            <person name="Hilbert H."/>
            <person name="Holsappel S."/>
            <person name="Hosono S."/>
            <person name="Hullo M.-F."/>
            <person name="Itaya M."/>
            <person name="Jones L.-M."/>
            <person name="Joris B."/>
            <person name="Karamata D."/>
            <person name="Kasahara Y."/>
            <person name="Klaerr-Blanchard M."/>
            <person name="Klein C."/>
            <person name="Kobayashi Y."/>
            <person name="Koetter P."/>
            <person name="Koningstein G."/>
            <person name="Krogh S."/>
            <person name="Kumano M."/>
            <person name="Kurita K."/>
            <person name="Lapidus A."/>
            <person name="Lardinois S."/>
            <person name="Lauber J."/>
            <person name="Lazarevic V."/>
            <person name="Lee S.-M."/>
            <person name="Levine A."/>
            <person name="Liu H."/>
            <person name="Masuda S."/>
            <person name="Mauel C."/>
            <person name="Medigue C."/>
            <person name="Medina N."/>
            <person name="Mellado R.P."/>
            <person name="Mizuno M."/>
            <person name="Moestl D."/>
            <person name="Nakai S."/>
            <person name="Noback M."/>
            <person name="Noone D."/>
            <person name="O'Reilly M."/>
            <person name="Ogawa K."/>
            <person name="Ogiwara A."/>
            <person name="Oudega B."/>
            <person name="Park S.-H."/>
            <person name="Parro V."/>
            <person name="Pohl T.M."/>
            <person name="Portetelle D."/>
            <person name="Porwollik S."/>
            <person name="Prescott A.M."/>
            <person name="Presecan E."/>
            <person name="Pujic P."/>
            <person name="Purnelle B."/>
            <person name="Rapoport G."/>
            <person name="Rey M."/>
            <person name="Reynolds S."/>
            <person name="Rieger M."/>
            <person name="Rivolta C."/>
            <person name="Rocha E."/>
            <person name="Roche B."/>
            <person name="Rose M."/>
            <person name="Sadaie Y."/>
            <person name="Sato T."/>
            <person name="Scanlan E."/>
            <person name="Schleich S."/>
            <person name="Schroeter R."/>
            <person name="Scoffone F."/>
            <person name="Sekiguchi J."/>
            <person name="Sekowska A."/>
            <person name="Seror S.J."/>
            <person name="Serror P."/>
            <person name="Shin B.-S."/>
            <person name="Soldo B."/>
            <person name="Sorokin A."/>
            <person name="Tacconi E."/>
            <person name="Takagi T."/>
            <person name="Takahashi H."/>
            <person name="Takemaru K."/>
            <person name="Takeuchi M."/>
            <person name="Tamakoshi A."/>
            <person name="Tanaka T."/>
            <person name="Terpstra P."/>
            <person name="Tognoni A."/>
            <person name="Tosato V."/>
            <person name="Uchiyama S."/>
            <person name="Vandenbol M."/>
            <person name="Vannier F."/>
            <person name="Vassarotti A."/>
            <person name="Viari A."/>
            <person name="Wambutt R."/>
            <person name="Wedler E."/>
            <person name="Wedler H."/>
            <person name="Weitzenegger T."/>
            <person name="Winters P."/>
            <person name="Wipat A."/>
            <person name="Yamamoto H."/>
            <person name="Yamane K."/>
            <person name="Yasumoto K."/>
            <person name="Yata K."/>
            <person name="Yoshida K."/>
            <person name="Yoshikawa H.-F."/>
            <person name="Zumstein E."/>
            <person name="Yoshikawa H."/>
            <person name="Danchin A."/>
        </authorList>
    </citation>
    <scope>NUCLEOTIDE SEQUENCE [LARGE SCALE GENOMIC DNA]</scope>
    <source>
        <strain>168</strain>
    </source>
</reference>
<dbReference type="EMBL" id="AL009126">
    <property type="protein sequence ID" value="CAX52617.1"/>
    <property type="molecule type" value="Genomic_DNA"/>
</dbReference>
<dbReference type="RefSeq" id="WP_003232305.1">
    <property type="nucleotide sequence ID" value="NZ_OZ025638.1"/>
</dbReference>
<dbReference type="FunCoup" id="C0H410">
    <property type="interactions" value="2"/>
</dbReference>
<dbReference type="STRING" id="224308.BSU14629"/>
<dbReference type="jPOST" id="C0H410"/>
<dbReference type="PaxDb" id="224308-BSU14629"/>
<dbReference type="EnsemblBacteria" id="CAX52617">
    <property type="protein sequence ID" value="CAX52617"/>
    <property type="gene ID" value="BSU_14629"/>
</dbReference>
<dbReference type="GeneID" id="8302953"/>
<dbReference type="KEGG" id="bsu:BSU14629"/>
<dbReference type="PATRIC" id="fig|224308.43.peg.1551"/>
<dbReference type="InParanoid" id="C0H410"/>
<dbReference type="OrthoDB" id="2971595at2"/>
<dbReference type="BioCyc" id="BSUB:BSU14629-MONOMER"/>
<dbReference type="Proteomes" id="UP000001570">
    <property type="component" value="Chromosome"/>
</dbReference>
<dbReference type="InterPro" id="IPR025236">
    <property type="entry name" value="SR1P"/>
</dbReference>
<dbReference type="Pfam" id="PF13790">
    <property type="entry name" value="SR1P"/>
    <property type="match status" value="1"/>
</dbReference>